<feature type="signal peptide" evidence="1">
    <location>
        <begin position="1"/>
        <end position="24"/>
    </location>
</feature>
<feature type="chain" id="PRO_0000026764" description="Protein YhjJ">
    <location>
        <begin position="25"/>
        <end position="498"/>
    </location>
</feature>
<organism>
    <name type="scientific">Escherichia coli (strain K12)</name>
    <dbReference type="NCBI Taxonomy" id="83333"/>
    <lineage>
        <taxon>Bacteria</taxon>
        <taxon>Pseudomonadati</taxon>
        <taxon>Pseudomonadota</taxon>
        <taxon>Gammaproteobacteria</taxon>
        <taxon>Enterobacterales</taxon>
        <taxon>Enterobacteriaceae</taxon>
        <taxon>Escherichia</taxon>
    </lineage>
</organism>
<reference key="1">
    <citation type="journal article" date="1994" name="Nucleic Acids Res.">
        <title>Analysis of the Escherichia coli genome. V. DNA sequence of the region from 76.0 to 81.5 minutes.</title>
        <authorList>
            <person name="Sofia H.J."/>
            <person name="Burland V."/>
            <person name="Daniels D.L."/>
            <person name="Plunkett G. III"/>
            <person name="Blattner F.R."/>
        </authorList>
    </citation>
    <scope>NUCLEOTIDE SEQUENCE [LARGE SCALE GENOMIC DNA]</scope>
    <source>
        <strain>K12 / MG1655 / ATCC 47076</strain>
    </source>
</reference>
<reference key="2">
    <citation type="journal article" date="1997" name="Science">
        <title>The complete genome sequence of Escherichia coli K-12.</title>
        <authorList>
            <person name="Blattner F.R."/>
            <person name="Plunkett G. III"/>
            <person name="Bloch C.A."/>
            <person name="Perna N.T."/>
            <person name="Burland V."/>
            <person name="Riley M."/>
            <person name="Collado-Vides J."/>
            <person name="Glasner J.D."/>
            <person name="Rode C.K."/>
            <person name="Mayhew G.F."/>
            <person name="Gregor J."/>
            <person name="Davis N.W."/>
            <person name="Kirkpatrick H.A."/>
            <person name="Goeden M.A."/>
            <person name="Rose D.J."/>
            <person name="Mau B."/>
            <person name="Shao Y."/>
        </authorList>
    </citation>
    <scope>NUCLEOTIDE SEQUENCE [LARGE SCALE GENOMIC DNA]</scope>
    <source>
        <strain>K12 / MG1655 / ATCC 47076</strain>
    </source>
</reference>
<reference key="3">
    <citation type="journal article" date="2006" name="Mol. Syst. Biol.">
        <title>Highly accurate genome sequences of Escherichia coli K-12 strains MG1655 and W3110.</title>
        <authorList>
            <person name="Hayashi K."/>
            <person name="Morooka N."/>
            <person name="Yamamoto Y."/>
            <person name="Fujita K."/>
            <person name="Isono K."/>
            <person name="Choi S."/>
            <person name="Ohtsubo E."/>
            <person name="Baba T."/>
            <person name="Wanner B.L."/>
            <person name="Mori H."/>
            <person name="Horiuchi T."/>
        </authorList>
    </citation>
    <scope>NUCLEOTIDE SEQUENCE [LARGE SCALE GENOMIC DNA]</scope>
    <source>
        <strain>K12 / W3110 / ATCC 27325 / DSM 5911</strain>
    </source>
</reference>
<reference key="4">
    <citation type="journal article" date="1997" name="Electrophoresis">
        <title>Comparing the predicted and observed properties of proteins encoded in the genome of Escherichia coli K-12.</title>
        <authorList>
            <person name="Link A.J."/>
            <person name="Robison K."/>
            <person name="Church G.M."/>
        </authorList>
    </citation>
    <scope>PROTEIN SEQUENCE OF 25-36</scope>
    <source>
        <strain>K12 / EMG2</strain>
    </source>
</reference>
<accession>P37648</accession>
<accession>Q2M7I9</accession>
<gene>
    <name type="primary">yhjJ</name>
    <name type="ordered locus">b3527</name>
    <name type="ordered locus">JW3495</name>
</gene>
<protein>
    <recommendedName>
        <fullName>Protein YhjJ</fullName>
    </recommendedName>
</protein>
<evidence type="ECO:0000269" key="1">
    <source>
    </source>
</evidence>
<evidence type="ECO:0000305" key="2"/>
<keyword id="KW-0903">Direct protein sequencing</keyword>
<keyword id="KW-0378">Hydrolase</keyword>
<keyword id="KW-0482">Metalloprotease</keyword>
<keyword id="KW-0574">Periplasm</keyword>
<keyword id="KW-0645">Protease</keyword>
<keyword id="KW-1185">Reference proteome</keyword>
<keyword id="KW-0732">Signal</keyword>
<keyword id="KW-0862">Zinc</keyword>
<dbReference type="EMBL" id="U00039">
    <property type="protein sequence ID" value="AAB18504.1"/>
    <property type="molecule type" value="Genomic_DNA"/>
</dbReference>
<dbReference type="EMBL" id="U00096">
    <property type="protein sequence ID" value="AAC76552.1"/>
    <property type="molecule type" value="Genomic_DNA"/>
</dbReference>
<dbReference type="EMBL" id="AP009048">
    <property type="protein sequence ID" value="BAE77767.1"/>
    <property type="molecule type" value="Genomic_DNA"/>
</dbReference>
<dbReference type="PIR" id="S47748">
    <property type="entry name" value="S47748"/>
</dbReference>
<dbReference type="RefSeq" id="NP_417984.1">
    <property type="nucleotide sequence ID" value="NC_000913.3"/>
</dbReference>
<dbReference type="RefSeq" id="WP_001163141.1">
    <property type="nucleotide sequence ID" value="NZ_SSZK01000039.1"/>
</dbReference>
<dbReference type="SMR" id="P37648"/>
<dbReference type="BioGRID" id="4262158">
    <property type="interactions" value="34"/>
</dbReference>
<dbReference type="FunCoup" id="P37648">
    <property type="interactions" value="14"/>
</dbReference>
<dbReference type="IntAct" id="P37648">
    <property type="interactions" value="2"/>
</dbReference>
<dbReference type="STRING" id="511145.b3527"/>
<dbReference type="jPOST" id="P37648"/>
<dbReference type="PaxDb" id="511145-b3527"/>
<dbReference type="EnsemblBacteria" id="AAC76552">
    <property type="protein sequence ID" value="AAC76552"/>
    <property type="gene ID" value="b3527"/>
</dbReference>
<dbReference type="GeneID" id="948040"/>
<dbReference type="KEGG" id="ecj:JW3495"/>
<dbReference type="KEGG" id="eco:b3527"/>
<dbReference type="KEGG" id="ecoc:C3026_19110"/>
<dbReference type="PATRIC" id="fig|1411691.4.peg.3190"/>
<dbReference type="EchoBASE" id="EB2164"/>
<dbReference type="eggNOG" id="COG0612">
    <property type="taxonomic scope" value="Bacteria"/>
</dbReference>
<dbReference type="HOGENOM" id="CLU_043932_0_0_6"/>
<dbReference type="InParanoid" id="P37648"/>
<dbReference type="OMA" id="FWHVQQN"/>
<dbReference type="OrthoDB" id="9811314at2"/>
<dbReference type="PhylomeDB" id="P37648"/>
<dbReference type="BioCyc" id="EcoCyc:EG12254-MONOMER"/>
<dbReference type="PRO" id="PR:P37648"/>
<dbReference type="Proteomes" id="UP000000625">
    <property type="component" value="Chromosome"/>
</dbReference>
<dbReference type="GO" id="GO:0042597">
    <property type="term" value="C:periplasmic space"/>
    <property type="evidence" value="ECO:0007669"/>
    <property type="project" value="UniProtKB-SubCell"/>
</dbReference>
<dbReference type="GO" id="GO:0046872">
    <property type="term" value="F:metal ion binding"/>
    <property type="evidence" value="ECO:0007669"/>
    <property type="project" value="InterPro"/>
</dbReference>
<dbReference type="GO" id="GO:0008237">
    <property type="term" value="F:metallopeptidase activity"/>
    <property type="evidence" value="ECO:0007669"/>
    <property type="project" value="UniProtKB-KW"/>
</dbReference>
<dbReference type="GO" id="GO:0006508">
    <property type="term" value="P:proteolysis"/>
    <property type="evidence" value="ECO:0007669"/>
    <property type="project" value="UniProtKB-KW"/>
</dbReference>
<dbReference type="GO" id="GO:0042542">
    <property type="term" value="P:response to hydrogen peroxide"/>
    <property type="evidence" value="ECO:0000315"/>
    <property type="project" value="EcoCyc"/>
</dbReference>
<dbReference type="Gene3D" id="3.30.830.10">
    <property type="entry name" value="Metalloenzyme, LuxS/M16 peptidase-like"/>
    <property type="match status" value="2"/>
</dbReference>
<dbReference type="InterPro" id="IPR011249">
    <property type="entry name" value="Metalloenz_LuxS/M16"/>
</dbReference>
<dbReference type="InterPro" id="IPR011765">
    <property type="entry name" value="Pept_M16_N"/>
</dbReference>
<dbReference type="InterPro" id="IPR050626">
    <property type="entry name" value="Peptidase_M16"/>
</dbReference>
<dbReference type="InterPro" id="IPR007863">
    <property type="entry name" value="Peptidase_M16_C"/>
</dbReference>
<dbReference type="PANTHER" id="PTHR43690">
    <property type="entry name" value="NARDILYSIN"/>
    <property type="match status" value="1"/>
</dbReference>
<dbReference type="PANTHER" id="PTHR43690:SF17">
    <property type="entry name" value="PROTEIN YHJJ"/>
    <property type="match status" value="1"/>
</dbReference>
<dbReference type="Pfam" id="PF00675">
    <property type="entry name" value="Peptidase_M16"/>
    <property type="match status" value="1"/>
</dbReference>
<dbReference type="Pfam" id="PF05193">
    <property type="entry name" value="Peptidase_M16_C"/>
    <property type="match status" value="1"/>
</dbReference>
<dbReference type="SUPFAM" id="SSF63411">
    <property type="entry name" value="LuxS/MPP-like metallohydrolase"/>
    <property type="match status" value="2"/>
</dbReference>
<sequence length="498" mass="55527">MQGTKIRLLAGGLLMMATAGYVQADALQPDPAWQQGTLSNGLQWQVLTTPQRPSDRVEIRLLVNTGSLAESTQQSGYSHAIPRIALTQSGGLDAAQARSLWQQGIDPKRPMPPVIVSYDTTLFNLSLPNNRNDLLKEALSYLANATGKLTITPETINHALQSQDMVATWPADTKEGWWRYRLKGSTLLGHDPADPLKQPVEAEKIKDFYQKWYTPDAMTLLVVGNVDARSVVDQINKTFGELKGKRETPAPVPTLSPLRAEAVSIMTDAVRQDRLSIMWDTPWQPIRESAALLRYWRADLAREALFWHVQQALSASNSKDIGLGFDCRVLYLRAQCAINIESPNDKLNSNLNLVARELAKVRDKGLPEEEFNALVAQKKLELQKLFAAYARADTDILMGQRMRSLQNQVVDIAPEQYQKLRQDFLNSLTVEMLNQDLRQQLSNDMALILLQPKGEPEFNMKALQAVWDQIMAPSTAAATTSVATDDVHPEVTDIPPAQ</sequence>
<name>YHJJ_ECOLI</name>
<proteinExistence type="evidence at protein level"/>
<comment type="subcellular location">
    <subcellularLocation>
        <location evidence="2">Periplasm</location>
    </subcellularLocation>
</comment>
<comment type="miscellaneous">
    <text>Has lost the active site residues.</text>
</comment>
<comment type="similarity">
    <text evidence="2">Belongs to the peptidase M16 family.</text>
</comment>